<protein>
    <recommendedName>
        <fullName>Phycoerythrin class 2 subunit gamma, linker polypeptide</fullName>
    </recommendedName>
    <alternativeName>
        <fullName>L-R 32.1</fullName>
    </alternativeName>
    <alternativeName>
        <fullName>Phycobilisome 32.1 kDa rod linker polypeptide</fullName>
    </alternativeName>
    <alternativeName>
        <fullName>Phycoerythrin class II gamma chain, linker polypeptide</fullName>
    </alternativeName>
</protein>
<feature type="chain" id="PRO_0000199294" description="Phycoerythrin class 2 subunit gamma, linker polypeptide">
    <location>
        <begin position="1"/>
        <end position="293"/>
    </location>
</feature>
<feature type="domain" description="PBS-linker" evidence="1">
    <location>
        <begin position="50"/>
        <end position="229"/>
    </location>
</feature>
<feature type="binding site" description="covalent">
    <location>
        <position position="49"/>
    </location>
    <ligand>
        <name>phycourobilin</name>
        <dbReference type="ChEBI" id="CHEBI:189062"/>
    </ligand>
</feature>
<name>PHEG_SYNPY</name>
<comment type="function">
    <text>This protein is a bile pigment-bearing rod linker polypeptide that associates with C-phycoerythrin.</text>
</comment>
<comment type="subcellular location">
    <subcellularLocation>
        <location>Cellular thylakoid membrane</location>
        <topology>Peripheral membrane protein</topology>
        <orientation>Cytoplasmic side</orientation>
    </subcellularLocation>
    <text>Periphery of the rods of the phycobilisome.</text>
</comment>
<comment type="PTM">
    <text>Contains one covalently linked phycourobilin chromophore.</text>
</comment>
<sequence>MLGAETSLQALTSATRTGPAAFSTKSKAGKNTVPRTVAGAIAEYKRQHCAAMGIGIGPRLLSECPFAVTFDRYSPDSSAALERVIVAAYRQVLGNLPPTDNQRETSLEVRLMNGEITVRDFVNGLAKSDFYKDNFFHAVGAQRGIELNFKHLLGRAPLNQQEVQNHIKLQAEEGFDALIDTLTDSAEYTEVFGADIVPYDRTKDSYAGMNTRSFNLMRDLGGMKVAISDNAQGRQSKTVNALASASRESTKPQPFSYVSVTQIPVKLPQQQYTGHNVPAMSDYVPFRPFGIFF</sequence>
<keyword id="KW-0042">Antenna complex</keyword>
<keyword id="KW-0089">Bile pigment</keyword>
<keyword id="KW-0157">Chromophore</keyword>
<keyword id="KW-0903">Direct protein sequencing</keyword>
<keyword id="KW-0249">Electron transport</keyword>
<keyword id="KW-0472">Membrane</keyword>
<keyword id="KW-0602">Photosynthesis</keyword>
<keyword id="KW-0605">Phycobilisome</keyword>
<keyword id="KW-0793">Thylakoid</keyword>
<keyword id="KW-0813">Transport</keyword>
<gene>
    <name type="primary">mpeC</name>
</gene>
<accession>Q02181</accession>
<dbReference type="EMBL" id="M95288">
    <property type="protein sequence ID" value="AAA27334.1"/>
    <property type="molecule type" value="Genomic_DNA"/>
</dbReference>
<dbReference type="RefSeq" id="WP_048347963.1">
    <property type="nucleotide sequence ID" value="NZ_CP011941.1"/>
</dbReference>
<dbReference type="SMR" id="Q02181"/>
<dbReference type="STRING" id="32052.WB44_13690"/>
<dbReference type="OrthoDB" id="538899at2"/>
<dbReference type="GO" id="GO:0030089">
    <property type="term" value="C:phycobilisome"/>
    <property type="evidence" value="ECO:0007669"/>
    <property type="project" value="UniProtKB-KW"/>
</dbReference>
<dbReference type="GO" id="GO:0031676">
    <property type="term" value="C:plasma membrane-derived thylakoid membrane"/>
    <property type="evidence" value="ECO:0007669"/>
    <property type="project" value="UniProtKB-SubCell"/>
</dbReference>
<dbReference type="GO" id="GO:0015979">
    <property type="term" value="P:photosynthesis"/>
    <property type="evidence" value="ECO:0007669"/>
    <property type="project" value="UniProtKB-KW"/>
</dbReference>
<dbReference type="Gene3D" id="1.10.3130.20">
    <property type="entry name" value="Phycobilisome linker domain"/>
    <property type="match status" value="1"/>
</dbReference>
<dbReference type="InterPro" id="IPR001297">
    <property type="entry name" value="PBS_linker_dom"/>
</dbReference>
<dbReference type="InterPro" id="IPR038255">
    <property type="entry name" value="PBS_linker_sf"/>
</dbReference>
<dbReference type="InterPro" id="IPR016470">
    <property type="entry name" value="Phycobilisome"/>
</dbReference>
<dbReference type="PANTHER" id="PTHR34011:SF6">
    <property type="entry name" value="PHYCOBILIPROTEIN APCE"/>
    <property type="match status" value="1"/>
</dbReference>
<dbReference type="PANTHER" id="PTHR34011">
    <property type="entry name" value="PHYCOBILISOME 32.1 KDA LINKER POLYPEPTIDE, PHYCOCYANIN-ASSOCIATED, ROD 2-RELATED"/>
    <property type="match status" value="1"/>
</dbReference>
<dbReference type="Pfam" id="PF00427">
    <property type="entry name" value="PBS_linker_poly"/>
    <property type="match status" value="1"/>
</dbReference>
<dbReference type="PIRSF" id="PIRSF005898">
    <property type="entry name" value="Phycobilisome_CpeC/CpcI"/>
    <property type="match status" value="1"/>
</dbReference>
<dbReference type="PROSITE" id="PS51445">
    <property type="entry name" value="PBS_LINKER"/>
    <property type="match status" value="1"/>
</dbReference>
<evidence type="ECO:0000255" key="1">
    <source>
        <dbReference type="PROSITE-ProRule" id="PRU00775"/>
    </source>
</evidence>
<proteinExistence type="evidence at protein level"/>
<organism>
    <name type="scientific">Synechococcus sp. (strain WH8020)</name>
    <dbReference type="NCBI Taxonomy" id="32052"/>
    <lineage>
        <taxon>Bacteria</taxon>
        <taxon>Bacillati</taxon>
        <taxon>Cyanobacteriota</taxon>
        <taxon>Cyanophyceae</taxon>
        <taxon>Synechococcales</taxon>
        <taxon>Synechococcaceae</taxon>
        <taxon>Synechococcus</taxon>
    </lineage>
</organism>
<reference key="1">
    <citation type="journal article" date="1993" name="Plant Mol. Biol.">
        <title>Genes of the R-phycocyanin II locus of marine Synechococcus spp., and comparison of protein-chromophore interactions in phycocyanins differing in bilin composition.</title>
        <authorList>
            <person name="de Lorimier R."/>
            <person name="Wilbanks S.M."/>
            <person name="Glazer A.N."/>
        </authorList>
    </citation>
    <scope>NUCLEOTIDE SEQUENCE [GENOMIC DNA]</scope>
</reference>
<reference key="2">
    <citation type="journal article" date="1993" name="J. Biol. Chem.">
        <title>Rod structure of a phycoerythrin II-containing phycobilisome. I. Organization and sequence of the gene cluster encoding the major phycobiliprotein rod components in the genome of marine Synechococcus sp. WH8020.</title>
        <authorList>
            <person name="Wilbanks S.M."/>
            <person name="Glazer A.N."/>
        </authorList>
    </citation>
    <scope>NUCLEOTIDE SEQUENCE [GENOMIC DNA]</scope>
</reference>
<reference key="3">
    <citation type="journal article" date="1993" name="J. Biol. Chem.">
        <title>Rod structure of a phycoerythrin II-containing phycobilisome. II. Complete sequence and bilin attachment site of a phycoerythrin gamma subunit.</title>
        <authorList>
            <person name="Wilbanks S.M."/>
            <person name="Glazer A.N."/>
        </authorList>
    </citation>
    <scope>PARTIAL PROTEIN SEQUENCE</scope>
    <scope>CHROMOPHORE BINDING</scope>
</reference>